<feature type="chain" id="PRO_0000148584" description="Argininosuccinate synthase">
    <location>
        <begin position="1"/>
        <end position="408"/>
    </location>
</feature>
<feature type="binding site" evidence="1">
    <location>
        <begin position="10"/>
        <end position="18"/>
    </location>
    <ligand>
        <name>ATP</name>
        <dbReference type="ChEBI" id="CHEBI:30616"/>
    </ligand>
</feature>
<feature type="binding site" evidence="1">
    <location>
        <position position="37"/>
    </location>
    <ligand>
        <name>ATP</name>
        <dbReference type="ChEBI" id="CHEBI:30616"/>
    </ligand>
</feature>
<feature type="binding site" evidence="1">
    <location>
        <position position="90"/>
    </location>
    <ligand>
        <name>L-citrulline</name>
        <dbReference type="ChEBI" id="CHEBI:57743"/>
    </ligand>
</feature>
<feature type="binding site" evidence="1">
    <location>
        <position position="95"/>
    </location>
    <ligand>
        <name>L-citrulline</name>
        <dbReference type="ChEBI" id="CHEBI:57743"/>
    </ligand>
</feature>
<feature type="binding site" evidence="1">
    <location>
        <position position="120"/>
    </location>
    <ligand>
        <name>ATP</name>
        <dbReference type="ChEBI" id="CHEBI:30616"/>
    </ligand>
</feature>
<feature type="binding site" evidence="1">
    <location>
        <position position="122"/>
    </location>
    <ligand>
        <name>L-aspartate</name>
        <dbReference type="ChEBI" id="CHEBI:29991"/>
    </ligand>
</feature>
<feature type="binding site" evidence="1">
    <location>
        <position position="126"/>
    </location>
    <ligand>
        <name>L-aspartate</name>
        <dbReference type="ChEBI" id="CHEBI:29991"/>
    </ligand>
</feature>
<feature type="binding site" evidence="1">
    <location>
        <position position="126"/>
    </location>
    <ligand>
        <name>L-citrulline</name>
        <dbReference type="ChEBI" id="CHEBI:57743"/>
    </ligand>
</feature>
<feature type="binding site" evidence="1">
    <location>
        <position position="127"/>
    </location>
    <ligand>
        <name>L-aspartate</name>
        <dbReference type="ChEBI" id="CHEBI:29991"/>
    </ligand>
</feature>
<feature type="binding site" evidence="1">
    <location>
        <position position="130"/>
    </location>
    <ligand>
        <name>L-citrulline</name>
        <dbReference type="ChEBI" id="CHEBI:57743"/>
    </ligand>
</feature>
<feature type="binding site" evidence="1">
    <location>
        <position position="181"/>
    </location>
    <ligand>
        <name>L-citrulline</name>
        <dbReference type="ChEBI" id="CHEBI:57743"/>
    </ligand>
</feature>
<feature type="binding site" evidence="1">
    <location>
        <position position="190"/>
    </location>
    <ligand>
        <name>L-citrulline</name>
        <dbReference type="ChEBI" id="CHEBI:57743"/>
    </ligand>
</feature>
<feature type="binding site" evidence="1">
    <location>
        <position position="266"/>
    </location>
    <ligand>
        <name>L-citrulline</name>
        <dbReference type="ChEBI" id="CHEBI:57743"/>
    </ligand>
</feature>
<feature type="binding site" evidence="1">
    <location>
        <position position="278"/>
    </location>
    <ligand>
        <name>L-citrulline</name>
        <dbReference type="ChEBI" id="CHEBI:57743"/>
    </ligand>
</feature>
<dbReference type="EC" id="6.3.4.5" evidence="1"/>
<dbReference type="EMBL" id="AE016825">
    <property type="protein sequence ID" value="AAQ59666.1"/>
    <property type="molecule type" value="Genomic_DNA"/>
</dbReference>
<dbReference type="RefSeq" id="WP_011135542.1">
    <property type="nucleotide sequence ID" value="NC_005085.1"/>
</dbReference>
<dbReference type="SMR" id="Q7NWJ5"/>
<dbReference type="STRING" id="243365.CV_1994"/>
<dbReference type="GeneID" id="66367657"/>
<dbReference type="KEGG" id="cvi:CV_1994"/>
<dbReference type="eggNOG" id="COG0137">
    <property type="taxonomic scope" value="Bacteria"/>
</dbReference>
<dbReference type="HOGENOM" id="CLU_032784_4_2_4"/>
<dbReference type="OrthoDB" id="9801641at2"/>
<dbReference type="UniPathway" id="UPA00068">
    <property type="reaction ID" value="UER00113"/>
</dbReference>
<dbReference type="Proteomes" id="UP000001424">
    <property type="component" value="Chromosome"/>
</dbReference>
<dbReference type="GO" id="GO:0005737">
    <property type="term" value="C:cytoplasm"/>
    <property type="evidence" value="ECO:0007669"/>
    <property type="project" value="UniProtKB-SubCell"/>
</dbReference>
<dbReference type="GO" id="GO:0004055">
    <property type="term" value="F:argininosuccinate synthase activity"/>
    <property type="evidence" value="ECO:0007669"/>
    <property type="project" value="UniProtKB-UniRule"/>
</dbReference>
<dbReference type="GO" id="GO:0005524">
    <property type="term" value="F:ATP binding"/>
    <property type="evidence" value="ECO:0007669"/>
    <property type="project" value="UniProtKB-UniRule"/>
</dbReference>
<dbReference type="GO" id="GO:0000053">
    <property type="term" value="P:argininosuccinate metabolic process"/>
    <property type="evidence" value="ECO:0007669"/>
    <property type="project" value="TreeGrafter"/>
</dbReference>
<dbReference type="GO" id="GO:0006526">
    <property type="term" value="P:L-arginine biosynthetic process"/>
    <property type="evidence" value="ECO:0007669"/>
    <property type="project" value="UniProtKB-UniRule"/>
</dbReference>
<dbReference type="GO" id="GO:0000050">
    <property type="term" value="P:urea cycle"/>
    <property type="evidence" value="ECO:0007669"/>
    <property type="project" value="TreeGrafter"/>
</dbReference>
<dbReference type="CDD" id="cd01999">
    <property type="entry name" value="ASS"/>
    <property type="match status" value="1"/>
</dbReference>
<dbReference type="FunFam" id="3.40.50.620:FF:000019">
    <property type="entry name" value="Argininosuccinate synthase"/>
    <property type="match status" value="1"/>
</dbReference>
<dbReference type="FunFam" id="3.90.1260.10:FF:000007">
    <property type="entry name" value="Argininosuccinate synthase"/>
    <property type="match status" value="1"/>
</dbReference>
<dbReference type="Gene3D" id="3.90.1260.10">
    <property type="entry name" value="Argininosuccinate synthetase, chain A, domain 2"/>
    <property type="match status" value="1"/>
</dbReference>
<dbReference type="Gene3D" id="3.40.50.620">
    <property type="entry name" value="HUPs"/>
    <property type="match status" value="1"/>
</dbReference>
<dbReference type="Gene3D" id="1.20.5.470">
    <property type="entry name" value="Single helix bin"/>
    <property type="match status" value="1"/>
</dbReference>
<dbReference type="HAMAP" id="MF_00005">
    <property type="entry name" value="Arg_succ_synth_type1"/>
    <property type="match status" value="1"/>
</dbReference>
<dbReference type="InterPro" id="IPR048268">
    <property type="entry name" value="Arginosuc_syn_C"/>
</dbReference>
<dbReference type="InterPro" id="IPR048267">
    <property type="entry name" value="Arginosuc_syn_N"/>
</dbReference>
<dbReference type="InterPro" id="IPR001518">
    <property type="entry name" value="Arginosuc_synth"/>
</dbReference>
<dbReference type="InterPro" id="IPR018223">
    <property type="entry name" value="Arginosuc_synth_CS"/>
</dbReference>
<dbReference type="InterPro" id="IPR023434">
    <property type="entry name" value="Arginosuc_synth_type_1_subfam"/>
</dbReference>
<dbReference type="InterPro" id="IPR024074">
    <property type="entry name" value="AS_cat/multimer_dom_body"/>
</dbReference>
<dbReference type="InterPro" id="IPR014729">
    <property type="entry name" value="Rossmann-like_a/b/a_fold"/>
</dbReference>
<dbReference type="NCBIfam" id="TIGR00032">
    <property type="entry name" value="argG"/>
    <property type="match status" value="1"/>
</dbReference>
<dbReference type="NCBIfam" id="NF001770">
    <property type="entry name" value="PRK00509.1"/>
    <property type="match status" value="1"/>
</dbReference>
<dbReference type="PANTHER" id="PTHR11587">
    <property type="entry name" value="ARGININOSUCCINATE SYNTHASE"/>
    <property type="match status" value="1"/>
</dbReference>
<dbReference type="PANTHER" id="PTHR11587:SF2">
    <property type="entry name" value="ARGININOSUCCINATE SYNTHASE"/>
    <property type="match status" value="1"/>
</dbReference>
<dbReference type="Pfam" id="PF20979">
    <property type="entry name" value="Arginosuc_syn_C"/>
    <property type="match status" value="1"/>
</dbReference>
<dbReference type="Pfam" id="PF00764">
    <property type="entry name" value="Arginosuc_synth"/>
    <property type="match status" value="1"/>
</dbReference>
<dbReference type="SUPFAM" id="SSF52402">
    <property type="entry name" value="Adenine nucleotide alpha hydrolases-like"/>
    <property type="match status" value="1"/>
</dbReference>
<dbReference type="SUPFAM" id="SSF69864">
    <property type="entry name" value="Argininosuccinate synthetase, C-terminal domain"/>
    <property type="match status" value="1"/>
</dbReference>
<dbReference type="PROSITE" id="PS00564">
    <property type="entry name" value="ARGININOSUCCIN_SYN_1"/>
    <property type="match status" value="1"/>
</dbReference>
<dbReference type="PROSITE" id="PS00565">
    <property type="entry name" value="ARGININOSUCCIN_SYN_2"/>
    <property type="match status" value="1"/>
</dbReference>
<reference key="1">
    <citation type="journal article" date="2003" name="Proc. Natl. Acad. Sci. U.S.A.">
        <title>The complete genome sequence of Chromobacterium violaceum reveals remarkable and exploitable bacterial adaptability.</title>
        <authorList>
            <person name="Vasconcelos A.T.R."/>
            <person name="de Almeida D.F."/>
            <person name="Hungria M."/>
            <person name="Guimaraes C.T."/>
            <person name="Antonio R.V."/>
            <person name="Almeida F.C."/>
            <person name="de Almeida L.G.P."/>
            <person name="de Almeida R."/>
            <person name="Alves-Gomes J.A."/>
            <person name="Andrade E.M."/>
            <person name="Araripe J."/>
            <person name="de Araujo M.F.F."/>
            <person name="Astolfi-Filho S."/>
            <person name="Azevedo V."/>
            <person name="Baptista A.J."/>
            <person name="Bataus L.A.M."/>
            <person name="Batista J.S."/>
            <person name="Belo A."/>
            <person name="van den Berg C."/>
            <person name="Bogo M."/>
            <person name="Bonatto S."/>
            <person name="Bordignon J."/>
            <person name="Brigido M.M."/>
            <person name="Brito C.A."/>
            <person name="Brocchi M."/>
            <person name="Burity H.A."/>
            <person name="Camargo A.A."/>
            <person name="Cardoso D.D.P."/>
            <person name="Carneiro N.P."/>
            <person name="Carraro D.M."/>
            <person name="Carvalho C.M.B."/>
            <person name="Cascardo J.C.M."/>
            <person name="Cavada B.S."/>
            <person name="Chueire L.M.O."/>
            <person name="Creczynski-Pasa T.B."/>
            <person name="Cunha-Junior N.C."/>
            <person name="Fagundes N."/>
            <person name="Falcao C.L."/>
            <person name="Fantinatti F."/>
            <person name="Farias I.P."/>
            <person name="Felipe M.S.S."/>
            <person name="Ferrari L.P."/>
            <person name="Ferro J.A."/>
            <person name="Ferro M.I.T."/>
            <person name="Franco G.R."/>
            <person name="Freitas N.S.A."/>
            <person name="Furlan L.R."/>
            <person name="Gazzinelli R.T."/>
            <person name="Gomes E.A."/>
            <person name="Goncalves P.R."/>
            <person name="Grangeiro T.B."/>
            <person name="Grattapaglia D."/>
            <person name="Grisard E.C."/>
            <person name="Hanna E.S."/>
            <person name="Jardim S.N."/>
            <person name="Laurino J."/>
            <person name="Leoi L.C.T."/>
            <person name="Lima L.F.A."/>
            <person name="Loureiro M.F."/>
            <person name="Lyra M.C.C.P."/>
            <person name="Madeira H.M.F."/>
            <person name="Manfio G.P."/>
            <person name="Maranhao A.Q."/>
            <person name="Martins W.S."/>
            <person name="di Mauro S.M.Z."/>
            <person name="de Medeiros S.R.B."/>
            <person name="Meissner R.V."/>
            <person name="Moreira M.A.M."/>
            <person name="Nascimento F.F."/>
            <person name="Nicolas M.F."/>
            <person name="Oliveira J.G."/>
            <person name="Oliveira S.C."/>
            <person name="Paixao R.F.C."/>
            <person name="Parente J.A."/>
            <person name="Pedrosa F.O."/>
            <person name="Pena S.D.J."/>
            <person name="Pereira J.O."/>
            <person name="Pereira M."/>
            <person name="Pinto L.S.R.C."/>
            <person name="Pinto L.S."/>
            <person name="Porto J.I.R."/>
            <person name="Potrich D.P."/>
            <person name="Ramalho-Neto C.E."/>
            <person name="Reis A.M.M."/>
            <person name="Rigo L.U."/>
            <person name="Rondinelli E."/>
            <person name="Santos E.B.P."/>
            <person name="Santos F.R."/>
            <person name="Schneider M.P.C."/>
            <person name="Seuanez H.N."/>
            <person name="Silva A.M.R."/>
            <person name="da Silva A.L.C."/>
            <person name="Silva D.W."/>
            <person name="Silva R."/>
            <person name="Simoes I.C."/>
            <person name="Simon D."/>
            <person name="Soares C.M.A."/>
            <person name="Soares R.B.A."/>
            <person name="Souza E.M."/>
            <person name="Souza K.R.L."/>
            <person name="Souza R.C."/>
            <person name="Steffens M.B.R."/>
            <person name="Steindel M."/>
            <person name="Teixeira S.R."/>
            <person name="Urmenyi T."/>
            <person name="Vettore A."/>
            <person name="Wassem R."/>
            <person name="Zaha A."/>
            <person name="Simpson A.J.G."/>
        </authorList>
    </citation>
    <scope>NUCLEOTIDE SEQUENCE [LARGE SCALE GENOMIC DNA]</scope>
    <source>
        <strain>ATCC 12472 / DSM 30191 / JCM 1249 / CCUG 213 / NBRC 12614 / NCIMB 9131 / NCTC 9757 / MK</strain>
    </source>
</reference>
<comment type="catalytic activity">
    <reaction evidence="1">
        <text>L-citrulline + L-aspartate + ATP = 2-(N(omega)-L-arginino)succinate + AMP + diphosphate + H(+)</text>
        <dbReference type="Rhea" id="RHEA:10932"/>
        <dbReference type="ChEBI" id="CHEBI:15378"/>
        <dbReference type="ChEBI" id="CHEBI:29991"/>
        <dbReference type="ChEBI" id="CHEBI:30616"/>
        <dbReference type="ChEBI" id="CHEBI:33019"/>
        <dbReference type="ChEBI" id="CHEBI:57472"/>
        <dbReference type="ChEBI" id="CHEBI:57743"/>
        <dbReference type="ChEBI" id="CHEBI:456215"/>
        <dbReference type="EC" id="6.3.4.5"/>
    </reaction>
</comment>
<comment type="pathway">
    <text evidence="1">Amino-acid biosynthesis; L-arginine biosynthesis; L-arginine from L-ornithine and carbamoyl phosphate: step 2/3.</text>
</comment>
<comment type="subunit">
    <text evidence="1">Homotetramer.</text>
</comment>
<comment type="subcellular location">
    <subcellularLocation>
        <location evidence="1">Cytoplasm</location>
    </subcellularLocation>
</comment>
<comment type="similarity">
    <text evidence="1">Belongs to the argininosuccinate synthase family. Type 1 subfamily.</text>
</comment>
<evidence type="ECO:0000255" key="1">
    <source>
        <dbReference type="HAMAP-Rule" id="MF_00005"/>
    </source>
</evidence>
<accession>Q7NWJ5</accession>
<protein>
    <recommendedName>
        <fullName evidence="1">Argininosuccinate synthase</fullName>
        <ecNumber evidence="1">6.3.4.5</ecNumber>
    </recommendedName>
    <alternativeName>
        <fullName evidence="1">Citrulline--aspartate ligase</fullName>
    </alternativeName>
</protein>
<sequence length="408" mass="45668">MSDIKKVVLAYSGGLDTSVILKWLQDEYQCEVVTFTADIGQGEEVEPARQKAVSLGIKPENIFIEDLREEFVRDFVYPMFRANTIYEGEYLLGTSIARPLIAKRQIEIANQVGADAVSHGATGKGNDQVRFELGYYALKPDVKVIAPWREWDLLSREKLLAYAETHGIDISKKKNGGSPYSMDANLLHISYEGTVLEDPAQEPEEDMWLWSVSPENAPDQAEYVELEYRKGDIVAVNGQALSPAGVLTELNRLGNKHGIGRLDIVENRYVGMKSRGCYETPGGTIMLKAHRAIESITLDREVAHLKDELMPKYAQLIYTGYWWSPERAMLQQMIDASQATVNGWVRLKLYKGNVIVVGRESKTDSLFDPTIATFDEDGGAYNHADAAGFIRLNALRMRIAANARNKRG</sequence>
<keyword id="KW-0028">Amino-acid biosynthesis</keyword>
<keyword id="KW-0055">Arginine biosynthesis</keyword>
<keyword id="KW-0067">ATP-binding</keyword>
<keyword id="KW-0963">Cytoplasm</keyword>
<keyword id="KW-0436">Ligase</keyword>
<keyword id="KW-0547">Nucleotide-binding</keyword>
<keyword id="KW-1185">Reference proteome</keyword>
<proteinExistence type="inferred from homology"/>
<gene>
    <name evidence="1" type="primary">argG</name>
    <name type="ordered locus">CV_1994</name>
</gene>
<name>ASSY_CHRVO</name>
<organism>
    <name type="scientific">Chromobacterium violaceum (strain ATCC 12472 / DSM 30191 / JCM 1249 / CCUG 213 / NBRC 12614 / NCIMB 9131 / NCTC 9757 / MK)</name>
    <dbReference type="NCBI Taxonomy" id="243365"/>
    <lineage>
        <taxon>Bacteria</taxon>
        <taxon>Pseudomonadati</taxon>
        <taxon>Pseudomonadota</taxon>
        <taxon>Betaproteobacteria</taxon>
        <taxon>Neisseriales</taxon>
        <taxon>Chromobacteriaceae</taxon>
        <taxon>Chromobacterium</taxon>
    </lineage>
</organism>